<reference key="1">
    <citation type="journal article" date="1998" name="Nature">
        <title>Deciphering the biology of Mycobacterium tuberculosis from the complete genome sequence.</title>
        <authorList>
            <person name="Cole S.T."/>
            <person name="Brosch R."/>
            <person name="Parkhill J."/>
            <person name="Garnier T."/>
            <person name="Churcher C.M."/>
            <person name="Harris D.E."/>
            <person name="Gordon S.V."/>
            <person name="Eiglmeier K."/>
            <person name="Gas S."/>
            <person name="Barry C.E. III"/>
            <person name="Tekaia F."/>
            <person name="Badcock K."/>
            <person name="Basham D."/>
            <person name="Brown D."/>
            <person name="Chillingworth T."/>
            <person name="Connor R."/>
            <person name="Davies R.M."/>
            <person name="Devlin K."/>
            <person name="Feltwell T."/>
            <person name="Gentles S."/>
            <person name="Hamlin N."/>
            <person name="Holroyd S."/>
            <person name="Hornsby T."/>
            <person name="Jagels K."/>
            <person name="Krogh A."/>
            <person name="McLean J."/>
            <person name="Moule S."/>
            <person name="Murphy L.D."/>
            <person name="Oliver S."/>
            <person name="Osborne J."/>
            <person name="Quail M.A."/>
            <person name="Rajandream M.A."/>
            <person name="Rogers J."/>
            <person name="Rutter S."/>
            <person name="Seeger K."/>
            <person name="Skelton S."/>
            <person name="Squares S."/>
            <person name="Squares R."/>
            <person name="Sulston J.E."/>
            <person name="Taylor K."/>
            <person name="Whitehead S."/>
            <person name="Barrell B.G."/>
        </authorList>
    </citation>
    <scope>NUCLEOTIDE SEQUENCE [LARGE SCALE GENOMIC DNA]</scope>
    <source>
        <strain>ATCC 25618 / H37Rv</strain>
    </source>
</reference>
<reference key="2">
    <citation type="journal article" date="2011" name="Mol. Cell. Proteomics">
        <title>Proteogenomic analysis of Mycobacterium tuberculosis by high resolution mass spectrometry.</title>
        <authorList>
            <person name="Kelkar D.S."/>
            <person name="Kumar D."/>
            <person name="Kumar P."/>
            <person name="Balakrishnan L."/>
            <person name="Muthusamy B."/>
            <person name="Yadav A.K."/>
            <person name="Shrivastava P."/>
            <person name="Marimuthu A."/>
            <person name="Anand S."/>
            <person name="Sundaram H."/>
            <person name="Kingsbury R."/>
            <person name="Harsha H.C."/>
            <person name="Nair B."/>
            <person name="Prasad T.S."/>
            <person name="Chauhan D.S."/>
            <person name="Katoch K."/>
            <person name="Katoch V.M."/>
            <person name="Kumar P."/>
            <person name="Chaerkady R."/>
            <person name="Ramachandran S."/>
            <person name="Dash D."/>
            <person name="Pandey A."/>
        </authorList>
    </citation>
    <scope>ACETYLATION [LARGE SCALE ANALYSIS] AT THR-2</scope>
    <scope>CLEAVAGE OF INITIATOR METHIONINE [LARGE SCALE ANALYSIS]</scope>
    <scope>IDENTIFICATION BY MASS SPECTROMETRY [LARGE SCALE ANALYSIS]</scope>
    <source>
        <strain>ATCC 25618 / H37Rv</strain>
    </source>
</reference>
<proteinExistence type="evidence at protein level"/>
<gene>
    <name evidence="1" type="primary">pyrH</name>
    <name type="ordered locus">Rv2883c</name>
    <name type="ORF">MTCY274.14c</name>
</gene>
<protein>
    <recommendedName>
        <fullName evidence="1">Uridylate kinase</fullName>
        <shortName evidence="1">UK</shortName>
        <ecNumber evidence="1">2.7.4.22</ecNumber>
    </recommendedName>
    <alternativeName>
        <fullName evidence="1">Uridine monophosphate kinase</fullName>
        <shortName evidence="1">UMP kinase</shortName>
        <shortName evidence="1">UMPK</shortName>
    </alternativeName>
</protein>
<sequence>MTEPDVAGAPASKPEPASTGAASAAQLSGYSRVLLKLGGEMFGGGQVGLDPDVVAQVARQIADVVRGGVQIAVVIGGGNFFRGAQLQQLGMERTRSDYMGMLGTVMNSLALQDFLEKEGIVTRVQTAITMGQVAEPYLPLRAVRHLEKGRVVIFGAGMGLPYFSTDTTAAQRALEIGADVVLMAKAVDGVFAEDPRVNPEAELLTAVSHREVLDRGLRVADATAFSLCMDNGMPILVFNLLTDGNIARAVRGEKIGTLVTT</sequence>
<keyword id="KW-0002">3D-structure</keyword>
<keyword id="KW-0007">Acetylation</keyword>
<keyword id="KW-0067">ATP-binding</keyword>
<keyword id="KW-0963">Cytoplasm</keyword>
<keyword id="KW-0418">Kinase</keyword>
<keyword id="KW-0547">Nucleotide-binding</keyword>
<keyword id="KW-0665">Pyrimidine biosynthesis</keyword>
<keyword id="KW-1185">Reference proteome</keyword>
<keyword id="KW-0808">Transferase</keyword>
<evidence type="ECO:0000255" key="1">
    <source>
        <dbReference type="HAMAP-Rule" id="MF_01220"/>
    </source>
</evidence>
<evidence type="ECO:0000256" key="2">
    <source>
        <dbReference type="SAM" id="MobiDB-lite"/>
    </source>
</evidence>
<evidence type="ECO:0007744" key="3">
    <source>
    </source>
</evidence>
<evidence type="ECO:0007829" key="4">
    <source>
        <dbReference type="PDB" id="3NWY"/>
    </source>
</evidence>
<evidence type="ECO:0007829" key="5">
    <source>
        <dbReference type="PDB" id="7BES"/>
    </source>
</evidence>
<evidence type="ECO:0007829" key="6">
    <source>
        <dbReference type="PDB" id="7BIX"/>
    </source>
</evidence>
<feature type="initiator methionine" description="Removed" evidence="3">
    <location>
        <position position="1"/>
    </location>
</feature>
<feature type="chain" id="PRO_0000143863" description="Uridylate kinase">
    <location>
        <begin position="2"/>
        <end position="261"/>
    </location>
</feature>
<feature type="region of interest" description="Disordered" evidence="2">
    <location>
        <begin position="1"/>
        <end position="23"/>
    </location>
</feature>
<feature type="binding site" evidence="1">
    <location>
        <begin position="36"/>
        <end position="39"/>
    </location>
    <ligand>
        <name>ATP</name>
        <dbReference type="ChEBI" id="CHEBI:30616"/>
    </ligand>
</feature>
<feature type="binding site" evidence="1">
    <location>
        <position position="77"/>
    </location>
    <ligand>
        <name>UMP</name>
        <dbReference type="ChEBI" id="CHEBI:57865"/>
    </ligand>
</feature>
<feature type="binding site" evidence="1">
    <location>
        <position position="78"/>
    </location>
    <ligand>
        <name>ATP</name>
        <dbReference type="ChEBI" id="CHEBI:30616"/>
    </ligand>
</feature>
<feature type="binding site" evidence="1">
    <location>
        <position position="82"/>
    </location>
    <ligand>
        <name>ATP</name>
        <dbReference type="ChEBI" id="CHEBI:30616"/>
    </ligand>
</feature>
<feature type="binding site" evidence="1">
    <location>
        <position position="97"/>
    </location>
    <ligand>
        <name>UMP</name>
        <dbReference type="ChEBI" id="CHEBI:57865"/>
    </ligand>
</feature>
<feature type="binding site" evidence="1">
    <location>
        <begin position="158"/>
        <end position="165"/>
    </location>
    <ligand>
        <name>UMP</name>
        <dbReference type="ChEBI" id="CHEBI:57865"/>
    </ligand>
</feature>
<feature type="binding site" evidence="1">
    <location>
        <position position="191"/>
    </location>
    <ligand>
        <name>ATP</name>
        <dbReference type="ChEBI" id="CHEBI:30616"/>
    </ligand>
</feature>
<feature type="binding site" evidence="1">
    <location>
        <position position="194"/>
    </location>
    <ligand>
        <name>ATP</name>
        <dbReference type="ChEBI" id="CHEBI:30616"/>
    </ligand>
</feature>
<feature type="modified residue" description="N-acetylthreonine" evidence="3">
    <location>
        <position position="2"/>
    </location>
</feature>
<feature type="strand" evidence="4">
    <location>
        <begin position="31"/>
        <end position="37"/>
    </location>
</feature>
<feature type="helix" evidence="4">
    <location>
        <begin position="39"/>
        <end position="43"/>
    </location>
</feature>
<feature type="strand" evidence="4">
    <location>
        <begin position="46"/>
        <end position="48"/>
    </location>
</feature>
<feature type="helix" evidence="4">
    <location>
        <begin position="51"/>
        <end position="66"/>
    </location>
</feature>
<feature type="strand" evidence="4">
    <location>
        <begin position="70"/>
        <end position="75"/>
    </location>
</feature>
<feature type="turn" evidence="5">
    <location>
        <begin position="78"/>
        <end position="80"/>
    </location>
</feature>
<feature type="turn" evidence="4">
    <location>
        <begin position="86"/>
        <end position="90"/>
    </location>
</feature>
<feature type="helix" evidence="4">
    <location>
        <begin position="93"/>
        <end position="117"/>
    </location>
</feature>
<feature type="strand" evidence="4">
    <location>
        <begin position="122"/>
        <end position="128"/>
    </location>
</feature>
<feature type="helix" evidence="4">
    <location>
        <begin position="131"/>
        <end position="133"/>
    </location>
</feature>
<feature type="strand" evidence="4">
    <location>
        <begin position="134"/>
        <end position="136"/>
    </location>
</feature>
<feature type="helix" evidence="4">
    <location>
        <begin position="139"/>
        <end position="147"/>
    </location>
</feature>
<feature type="strand" evidence="4">
    <location>
        <begin position="151"/>
        <end position="156"/>
    </location>
</feature>
<feature type="strand" evidence="6">
    <location>
        <begin position="159"/>
        <end position="162"/>
    </location>
</feature>
<feature type="helix" evidence="4">
    <location>
        <begin position="165"/>
        <end position="175"/>
    </location>
</feature>
<feature type="strand" evidence="4">
    <location>
        <begin position="179"/>
        <end position="189"/>
    </location>
</feature>
<feature type="strand" evidence="5">
    <location>
        <begin position="191"/>
        <end position="193"/>
    </location>
</feature>
<feature type="strand" evidence="4">
    <location>
        <begin position="205"/>
        <end position="207"/>
    </location>
</feature>
<feature type="helix" evidence="4">
    <location>
        <begin position="209"/>
        <end position="213"/>
    </location>
</feature>
<feature type="turn" evidence="4">
    <location>
        <begin position="214"/>
        <end position="216"/>
    </location>
</feature>
<feature type="helix" evidence="4">
    <location>
        <begin position="222"/>
        <end position="229"/>
    </location>
</feature>
<feature type="turn" evidence="4">
    <location>
        <begin position="230"/>
        <end position="232"/>
    </location>
</feature>
<feature type="strand" evidence="4">
    <location>
        <begin position="235"/>
        <end position="239"/>
    </location>
</feature>
<feature type="helix" evidence="4">
    <location>
        <begin position="245"/>
        <end position="251"/>
    </location>
</feature>
<feature type="strand" evidence="4">
    <location>
        <begin position="256"/>
        <end position="259"/>
    </location>
</feature>
<organism>
    <name type="scientific">Mycobacterium tuberculosis (strain ATCC 25618 / H37Rv)</name>
    <dbReference type="NCBI Taxonomy" id="83332"/>
    <lineage>
        <taxon>Bacteria</taxon>
        <taxon>Bacillati</taxon>
        <taxon>Actinomycetota</taxon>
        <taxon>Actinomycetes</taxon>
        <taxon>Mycobacteriales</taxon>
        <taxon>Mycobacteriaceae</taxon>
        <taxon>Mycobacterium</taxon>
        <taxon>Mycobacterium tuberculosis complex</taxon>
    </lineage>
</organism>
<dbReference type="EC" id="2.7.4.22" evidence="1"/>
<dbReference type="EMBL" id="AL123456">
    <property type="protein sequence ID" value="CCP45685.1"/>
    <property type="molecule type" value="Genomic_DNA"/>
</dbReference>
<dbReference type="PIR" id="F70924">
    <property type="entry name" value="F70924"/>
</dbReference>
<dbReference type="RefSeq" id="NP_217399.1">
    <property type="nucleotide sequence ID" value="NC_000962.3"/>
</dbReference>
<dbReference type="RefSeq" id="WP_003414665.1">
    <property type="nucleotide sequence ID" value="NZ_NVQJ01000006.1"/>
</dbReference>
<dbReference type="PDB" id="3NWY">
    <property type="method" value="X-ray"/>
    <property type="resolution" value="2.54 A"/>
    <property type="chains" value="A/B/C/D/E/F=1-261"/>
</dbReference>
<dbReference type="PDB" id="7BES">
    <property type="method" value="EM"/>
    <property type="resolution" value="2.85 A"/>
    <property type="chains" value="A/B/C=1-261"/>
</dbReference>
<dbReference type="PDB" id="7BIX">
    <property type="method" value="X-ray"/>
    <property type="resolution" value="3.12 A"/>
    <property type="chains" value="A/B/C/D/E/F/G/H/I/J/K/L=1-261"/>
</dbReference>
<dbReference type="PDB" id="7BL7">
    <property type="method" value="X-ray"/>
    <property type="resolution" value="3.33 A"/>
    <property type="chains" value="A/B/C/D/E/F/G/H/I/J/K/L=1-261"/>
</dbReference>
<dbReference type="PDBsum" id="3NWY"/>
<dbReference type="PDBsum" id="7BES"/>
<dbReference type="PDBsum" id="7BIX"/>
<dbReference type="PDBsum" id="7BL7"/>
<dbReference type="SMR" id="P9WHK5"/>
<dbReference type="FunCoup" id="P9WHK5">
    <property type="interactions" value="346"/>
</dbReference>
<dbReference type="STRING" id="83332.Rv2883c"/>
<dbReference type="iPTMnet" id="P9WHK5"/>
<dbReference type="PaxDb" id="83332-Rv2883c"/>
<dbReference type="DNASU" id="887709"/>
<dbReference type="GeneID" id="45426871"/>
<dbReference type="GeneID" id="887709"/>
<dbReference type="KEGG" id="mtu:Rv2883c"/>
<dbReference type="KEGG" id="mtv:RVBD_2883c"/>
<dbReference type="TubercuList" id="Rv2883c"/>
<dbReference type="eggNOG" id="COG0528">
    <property type="taxonomic scope" value="Bacteria"/>
</dbReference>
<dbReference type="InParanoid" id="P9WHK5"/>
<dbReference type="OrthoDB" id="9807458at2"/>
<dbReference type="PhylomeDB" id="P9WHK5"/>
<dbReference type="BRENDA" id="2.7.4.22">
    <property type="organism ID" value="3445"/>
</dbReference>
<dbReference type="UniPathway" id="UPA00159">
    <property type="reaction ID" value="UER00275"/>
</dbReference>
<dbReference type="EvolutionaryTrace" id="P9WHK5"/>
<dbReference type="Proteomes" id="UP000001584">
    <property type="component" value="Chromosome"/>
</dbReference>
<dbReference type="GO" id="GO:0005737">
    <property type="term" value="C:cytoplasm"/>
    <property type="evidence" value="ECO:0007669"/>
    <property type="project" value="UniProtKB-SubCell"/>
</dbReference>
<dbReference type="GO" id="GO:0005886">
    <property type="term" value="C:plasma membrane"/>
    <property type="evidence" value="ECO:0007005"/>
    <property type="project" value="MTBBASE"/>
</dbReference>
<dbReference type="GO" id="GO:0005524">
    <property type="term" value="F:ATP binding"/>
    <property type="evidence" value="ECO:0007669"/>
    <property type="project" value="UniProtKB-KW"/>
</dbReference>
<dbReference type="GO" id="GO:0000287">
    <property type="term" value="F:magnesium ion binding"/>
    <property type="evidence" value="ECO:0000314"/>
    <property type="project" value="MTBBASE"/>
</dbReference>
<dbReference type="GO" id="GO:0033862">
    <property type="term" value="F:UMP kinase activity"/>
    <property type="evidence" value="ECO:0000314"/>
    <property type="project" value="MTBBASE"/>
</dbReference>
<dbReference type="GO" id="GO:0044210">
    <property type="term" value="P:'de novo' CTP biosynthetic process"/>
    <property type="evidence" value="ECO:0007669"/>
    <property type="project" value="UniProtKB-UniRule"/>
</dbReference>
<dbReference type="GO" id="GO:0006225">
    <property type="term" value="P:UDP biosynthetic process"/>
    <property type="evidence" value="ECO:0000314"/>
    <property type="project" value="MTBBASE"/>
</dbReference>
<dbReference type="CDD" id="cd04254">
    <property type="entry name" value="AAK_UMPK-PyrH-Ec"/>
    <property type="match status" value="1"/>
</dbReference>
<dbReference type="FunFam" id="3.40.1160.10:FF:000001">
    <property type="entry name" value="Uridylate kinase"/>
    <property type="match status" value="1"/>
</dbReference>
<dbReference type="Gene3D" id="3.40.1160.10">
    <property type="entry name" value="Acetylglutamate kinase-like"/>
    <property type="match status" value="1"/>
</dbReference>
<dbReference type="HAMAP" id="MF_01220_B">
    <property type="entry name" value="PyrH_B"/>
    <property type="match status" value="1"/>
</dbReference>
<dbReference type="InterPro" id="IPR036393">
    <property type="entry name" value="AceGlu_kinase-like_sf"/>
</dbReference>
<dbReference type="InterPro" id="IPR001048">
    <property type="entry name" value="Asp/Glu/Uridylate_kinase"/>
</dbReference>
<dbReference type="InterPro" id="IPR011817">
    <property type="entry name" value="Uridylate_kinase"/>
</dbReference>
<dbReference type="InterPro" id="IPR015963">
    <property type="entry name" value="Uridylate_kinase_bac"/>
</dbReference>
<dbReference type="NCBIfam" id="TIGR02075">
    <property type="entry name" value="pyrH_bact"/>
    <property type="match status" value="1"/>
</dbReference>
<dbReference type="PANTHER" id="PTHR42833">
    <property type="entry name" value="URIDYLATE KINASE"/>
    <property type="match status" value="1"/>
</dbReference>
<dbReference type="PANTHER" id="PTHR42833:SF4">
    <property type="entry name" value="URIDYLATE KINASE PUMPKIN, CHLOROPLASTIC"/>
    <property type="match status" value="1"/>
</dbReference>
<dbReference type="Pfam" id="PF00696">
    <property type="entry name" value="AA_kinase"/>
    <property type="match status" value="1"/>
</dbReference>
<dbReference type="PIRSF" id="PIRSF005650">
    <property type="entry name" value="Uridylate_kin"/>
    <property type="match status" value="1"/>
</dbReference>
<dbReference type="SUPFAM" id="SSF53633">
    <property type="entry name" value="Carbamate kinase-like"/>
    <property type="match status" value="1"/>
</dbReference>
<accession>P9WHK5</accession>
<accession>L0TAX5</accession>
<accession>P65929</accession>
<accession>Q10791</accession>
<name>PYRH_MYCTU</name>
<comment type="function">
    <text evidence="1">Catalyzes the reversible phosphorylation of UMP to UDP.</text>
</comment>
<comment type="catalytic activity">
    <reaction evidence="1">
        <text>UMP + ATP = UDP + ADP</text>
        <dbReference type="Rhea" id="RHEA:24400"/>
        <dbReference type="ChEBI" id="CHEBI:30616"/>
        <dbReference type="ChEBI" id="CHEBI:57865"/>
        <dbReference type="ChEBI" id="CHEBI:58223"/>
        <dbReference type="ChEBI" id="CHEBI:456216"/>
        <dbReference type="EC" id="2.7.4.22"/>
    </reaction>
</comment>
<comment type="activity regulation">
    <text evidence="1">Inhibited by UTP.</text>
</comment>
<comment type="pathway">
    <text evidence="1">Pyrimidine metabolism; CTP biosynthesis via de novo pathway; UDP from UMP (UMPK route): step 1/1.</text>
</comment>
<comment type="subunit">
    <text evidence="1">Homohexamer.</text>
</comment>
<comment type="subcellular location">
    <subcellularLocation>
        <location evidence="1">Cytoplasm</location>
    </subcellularLocation>
</comment>
<comment type="similarity">
    <text evidence="1">Belongs to the UMP kinase family.</text>
</comment>